<reference key="1">
    <citation type="journal article" date="2006" name="Proc. Natl. Acad. Sci. U.S.A.">
        <title>Evolution of sensory complexity recorded in a myxobacterial genome.</title>
        <authorList>
            <person name="Goldman B.S."/>
            <person name="Nierman W.C."/>
            <person name="Kaiser D."/>
            <person name="Slater S.C."/>
            <person name="Durkin A.S."/>
            <person name="Eisen J.A."/>
            <person name="Ronning C.M."/>
            <person name="Barbazuk W.B."/>
            <person name="Blanchard M."/>
            <person name="Field C."/>
            <person name="Halling C."/>
            <person name="Hinkle G."/>
            <person name="Iartchuk O."/>
            <person name="Kim H.S."/>
            <person name="Mackenzie C."/>
            <person name="Madupu R."/>
            <person name="Miller N."/>
            <person name="Shvartsbeyn A."/>
            <person name="Sullivan S.A."/>
            <person name="Vaudin M."/>
            <person name="Wiegand R."/>
            <person name="Kaplan H.B."/>
        </authorList>
    </citation>
    <scope>NUCLEOTIDE SEQUENCE [LARGE SCALE GENOMIC DNA]</scope>
    <source>
        <strain>DK1622</strain>
    </source>
</reference>
<organism>
    <name type="scientific">Myxococcus xanthus (strain DK1622)</name>
    <dbReference type="NCBI Taxonomy" id="246197"/>
    <lineage>
        <taxon>Bacteria</taxon>
        <taxon>Pseudomonadati</taxon>
        <taxon>Myxococcota</taxon>
        <taxon>Myxococcia</taxon>
        <taxon>Myxococcales</taxon>
        <taxon>Cystobacterineae</taxon>
        <taxon>Myxococcaceae</taxon>
        <taxon>Myxococcus</taxon>
    </lineage>
</organism>
<protein>
    <recommendedName>
        <fullName evidence="1">Kynureninase</fullName>
        <ecNumber evidence="1">3.7.1.3</ecNumber>
    </recommendedName>
    <alternativeName>
        <fullName evidence="1">L-kynurenine hydrolase</fullName>
    </alternativeName>
</protein>
<dbReference type="EC" id="3.7.1.3" evidence="1"/>
<dbReference type="EMBL" id="CP000113">
    <property type="protein sequence ID" value="ABF87345.1"/>
    <property type="molecule type" value="Genomic_DNA"/>
</dbReference>
<dbReference type="RefSeq" id="WP_011551038.1">
    <property type="nucleotide sequence ID" value="NC_008095.1"/>
</dbReference>
<dbReference type="SMR" id="Q1DDU5"/>
<dbReference type="STRING" id="246197.MXAN_0917"/>
<dbReference type="EnsemblBacteria" id="ABF87345">
    <property type="protein sequence ID" value="ABF87345"/>
    <property type="gene ID" value="MXAN_0917"/>
</dbReference>
<dbReference type="GeneID" id="41358376"/>
<dbReference type="KEGG" id="mxa:MXAN_0917"/>
<dbReference type="eggNOG" id="COG3844">
    <property type="taxonomic scope" value="Bacteria"/>
</dbReference>
<dbReference type="HOGENOM" id="CLU_003433_4_0_7"/>
<dbReference type="OrthoDB" id="9812626at2"/>
<dbReference type="UniPathway" id="UPA00253">
    <property type="reaction ID" value="UER00329"/>
</dbReference>
<dbReference type="UniPathway" id="UPA00334">
    <property type="reaction ID" value="UER00455"/>
</dbReference>
<dbReference type="Proteomes" id="UP000002402">
    <property type="component" value="Chromosome"/>
</dbReference>
<dbReference type="GO" id="GO:0005737">
    <property type="term" value="C:cytoplasm"/>
    <property type="evidence" value="ECO:0007669"/>
    <property type="project" value="InterPro"/>
</dbReference>
<dbReference type="GO" id="GO:0030429">
    <property type="term" value="F:kynureninase activity"/>
    <property type="evidence" value="ECO:0007669"/>
    <property type="project" value="UniProtKB-UniRule"/>
</dbReference>
<dbReference type="GO" id="GO:0030170">
    <property type="term" value="F:pyridoxal phosphate binding"/>
    <property type="evidence" value="ECO:0007669"/>
    <property type="project" value="UniProtKB-UniRule"/>
</dbReference>
<dbReference type="GO" id="GO:0043420">
    <property type="term" value="P:anthranilate metabolic process"/>
    <property type="evidence" value="ECO:0007669"/>
    <property type="project" value="TreeGrafter"/>
</dbReference>
<dbReference type="GO" id="GO:0097053">
    <property type="term" value="P:L-kynurenine catabolic process"/>
    <property type="evidence" value="ECO:0007669"/>
    <property type="project" value="UniProtKB-UniRule"/>
</dbReference>
<dbReference type="GO" id="GO:0019441">
    <property type="term" value="P:L-tryptophan catabolic process to kynurenine"/>
    <property type="evidence" value="ECO:0007669"/>
    <property type="project" value="TreeGrafter"/>
</dbReference>
<dbReference type="GO" id="GO:0009435">
    <property type="term" value="P:NAD biosynthetic process"/>
    <property type="evidence" value="ECO:0007669"/>
    <property type="project" value="UniProtKB-UniPathway"/>
</dbReference>
<dbReference type="GO" id="GO:0019805">
    <property type="term" value="P:quinolinate biosynthetic process"/>
    <property type="evidence" value="ECO:0007669"/>
    <property type="project" value="UniProtKB-UniRule"/>
</dbReference>
<dbReference type="FunFam" id="3.40.640.10:FF:000031">
    <property type="entry name" value="Kynureninase"/>
    <property type="match status" value="1"/>
</dbReference>
<dbReference type="Gene3D" id="3.90.1150.10">
    <property type="entry name" value="Aspartate Aminotransferase, domain 1"/>
    <property type="match status" value="1"/>
</dbReference>
<dbReference type="Gene3D" id="3.40.640.10">
    <property type="entry name" value="Type I PLP-dependent aspartate aminotransferase-like (Major domain)"/>
    <property type="match status" value="1"/>
</dbReference>
<dbReference type="HAMAP" id="MF_01970">
    <property type="entry name" value="Kynureninase"/>
    <property type="match status" value="1"/>
</dbReference>
<dbReference type="InterPro" id="IPR010111">
    <property type="entry name" value="Kynureninase"/>
</dbReference>
<dbReference type="InterPro" id="IPR015424">
    <property type="entry name" value="PyrdxlP-dep_Trfase"/>
</dbReference>
<dbReference type="InterPro" id="IPR015421">
    <property type="entry name" value="PyrdxlP-dep_Trfase_major"/>
</dbReference>
<dbReference type="InterPro" id="IPR015422">
    <property type="entry name" value="PyrdxlP-dep_Trfase_small"/>
</dbReference>
<dbReference type="NCBIfam" id="TIGR01814">
    <property type="entry name" value="kynureninase"/>
    <property type="match status" value="1"/>
</dbReference>
<dbReference type="PANTHER" id="PTHR14084">
    <property type="entry name" value="KYNURENINASE"/>
    <property type="match status" value="1"/>
</dbReference>
<dbReference type="PANTHER" id="PTHR14084:SF0">
    <property type="entry name" value="KYNURENINASE"/>
    <property type="match status" value="1"/>
</dbReference>
<dbReference type="Pfam" id="PF22580">
    <property type="entry name" value="KYNU_C"/>
    <property type="match status" value="1"/>
</dbReference>
<dbReference type="PIRSF" id="PIRSF038800">
    <property type="entry name" value="KYNU"/>
    <property type="match status" value="1"/>
</dbReference>
<dbReference type="SUPFAM" id="SSF53383">
    <property type="entry name" value="PLP-dependent transferases"/>
    <property type="match status" value="1"/>
</dbReference>
<feature type="chain" id="PRO_0000357009" description="Kynureninase">
    <location>
        <begin position="1"/>
        <end position="426"/>
    </location>
</feature>
<feature type="binding site" evidence="1">
    <location>
        <position position="110"/>
    </location>
    <ligand>
        <name>pyridoxal 5'-phosphate</name>
        <dbReference type="ChEBI" id="CHEBI:597326"/>
    </ligand>
</feature>
<feature type="binding site" evidence="1">
    <location>
        <position position="111"/>
    </location>
    <ligand>
        <name>pyridoxal 5'-phosphate</name>
        <dbReference type="ChEBI" id="CHEBI:597326"/>
    </ligand>
</feature>
<feature type="binding site" evidence="1">
    <location>
        <begin position="138"/>
        <end position="141"/>
    </location>
    <ligand>
        <name>pyridoxal 5'-phosphate</name>
        <dbReference type="ChEBI" id="CHEBI:597326"/>
    </ligand>
</feature>
<feature type="binding site" evidence="1">
    <location>
        <position position="223"/>
    </location>
    <ligand>
        <name>pyridoxal 5'-phosphate</name>
        <dbReference type="ChEBI" id="CHEBI:597326"/>
    </ligand>
</feature>
<feature type="binding site" evidence="1">
    <location>
        <position position="226"/>
    </location>
    <ligand>
        <name>pyridoxal 5'-phosphate</name>
        <dbReference type="ChEBI" id="CHEBI:597326"/>
    </ligand>
</feature>
<feature type="binding site" evidence="1">
    <location>
        <position position="248"/>
    </location>
    <ligand>
        <name>pyridoxal 5'-phosphate</name>
        <dbReference type="ChEBI" id="CHEBI:597326"/>
    </ligand>
</feature>
<feature type="binding site" evidence="1">
    <location>
        <position position="279"/>
    </location>
    <ligand>
        <name>pyridoxal 5'-phosphate</name>
        <dbReference type="ChEBI" id="CHEBI:597326"/>
    </ligand>
</feature>
<feature type="binding site" evidence="1">
    <location>
        <position position="307"/>
    </location>
    <ligand>
        <name>pyridoxal 5'-phosphate</name>
        <dbReference type="ChEBI" id="CHEBI:597326"/>
    </ligand>
</feature>
<feature type="modified residue" description="N6-(pyridoxal phosphate)lysine" evidence="1">
    <location>
        <position position="249"/>
    </location>
</feature>
<keyword id="KW-0378">Hydrolase</keyword>
<keyword id="KW-0662">Pyridine nucleotide biosynthesis</keyword>
<keyword id="KW-0663">Pyridoxal phosphate</keyword>
<keyword id="KW-1185">Reference proteome</keyword>
<evidence type="ECO:0000255" key="1">
    <source>
        <dbReference type="HAMAP-Rule" id="MF_01970"/>
    </source>
</evidence>
<gene>
    <name evidence="1" type="primary">kynU</name>
    <name type="ordered locus">MXAN_0917</name>
</gene>
<proteinExistence type="inferred from homology"/>
<name>KYNU_MYXXD</name>
<comment type="function">
    <text evidence="1">Catalyzes the cleavage of L-kynurenine (L-Kyn) and L-3-hydroxykynurenine (L-3OHKyn) into anthranilic acid (AA) and 3-hydroxyanthranilic acid (3-OHAA), respectively.</text>
</comment>
<comment type="catalytic activity">
    <reaction evidence="1">
        <text>L-kynurenine + H2O = anthranilate + L-alanine + H(+)</text>
        <dbReference type="Rhea" id="RHEA:16813"/>
        <dbReference type="ChEBI" id="CHEBI:15377"/>
        <dbReference type="ChEBI" id="CHEBI:15378"/>
        <dbReference type="ChEBI" id="CHEBI:16567"/>
        <dbReference type="ChEBI" id="CHEBI:57959"/>
        <dbReference type="ChEBI" id="CHEBI:57972"/>
        <dbReference type="EC" id="3.7.1.3"/>
    </reaction>
</comment>
<comment type="catalytic activity">
    <reaction evidence="1">
        <text>3-hydroxy-L-kynurenine + H2O = 3-hydroxyanthranilate + L-alanine + H(+)</text>
        <dbReference type="Rhea" id="RHEA:25143"/>
        <dbReference type="ChEBI" id="CHEBI:15377"/>
        <dbReference type="ChEBI" id="CHEBI:15378"/>
        <dbReference type="ChEBI" id="CHEBI:36559"/>
        <dbReference type="ChEBI" id="CHEBI:57972"/>
        <dbReference type="ChEBI" id="CHEBI:58125"/>
        <dbReference type="EC" id="3.7.1.3"/>
    </reaction>
</comment>
<comment type="cofactor">
    <cofactor evidence="1">
        <name>pyridoxal 5'-phosphate</name>
        <dbReference type="ChEBI" id="CHEBI:597326"/>
    </cofactor>
</comment>
<comment type="pathway">
    <text evidence="1">Amino-acid degradation; L-kynurenine degradation; L-alanine and anthranilate from L-kynurenine: step 1/1.</text>
</comment>
<comment type="pathway">
    <text evidence="1">Cofactor biosynthesis; NAD(+) biosynthesis; quinolinate from L-kynurenine: step 2/3.</text>
</comment>
<comment type="subunit">
    <text evidence="1">Homodimer.</text>
</comment>
<comment type="similarity">
    <text evidence="1">Belongs to the kynureninase family.</text>
</comment>
<accession>Q1DDU5</accession>
<sequence>MTTPYLFEDSESFARKLDAEDALRGYRDAFHFPPGPDGKPVVYLAGNSLGLQPRNAARYIQEELEDWARLGVEGHHHGRHPWLHYHELVTEHAARLVGAKPLEVVVMNTLSVNLHLMMVSFYRPTKQRFKILVEAGAFPSDQYAVASQVRFHGYDAREAVLELKPREGEETLRTEDILETIERHGHEVALVMLGSVNYLTGQAFDLAAITKAAHAKGCFVGFDLAHGAGNLRLSLHDDGPDFAVWCSYKYLNAGPGALGGVFVHERHAHTKDLPRFEGWWGHDKQTRFQMGPTFSALPGAEGWQLSNPPIFQLAALRASLELFDQAGMAALRAKSERLTGYLEFLLDRLPEGFVRITTPRDVKQRGAQLSLRFRGEPQGLLKRLGDAGIICDFRKPDIIRAAPAPLYNSFTDVYRFVKTLEGHARE</sequence>